<gene>
    <name type="primary">Dipk1c</name>
    <name evidence="5" type="synonym">Fam69c</name>
</gene>
<feature type="chain" id="PRO_0000286708" description="Divergent protein kinase domain 1C">
    <location>
        <begin position="1"/>
        <end position="410"/>
    </location>
</feature>
<feature type="topological domain" description="Cytoplasmic" evidence="1">
    <location>
        <begin position="1"/>
        <end position="19"/>
    </location>
</feature>
<feature type="transmembrane region" description="Helical" evidence="1">
    <location>
        <begin position="20"/>
        <end position="40"/>
    </location>
</feature>
<feature type="topological domain" description="Lumenal" evidence="1">
    <location>
        <begin position="41"/>
        <end position="410"/>
    </location>
</feature>
<feature type="short sequence motif" description="May mediate ER retention">
    <location>
        <begin position="18"/>
        <end position="19"/>
    </location>
</feature>
<feature type="splice variant" id="VSP_039089" description="In isoform 2." evidence="3">
    <location>
        <begin position="1"/>
        <end position="146"/>
    </location>
</feature>
<comment type="subcellular location">
    <subcellularLocation>
        <location evidence="2">Endoplasmic reticulum membrane</location>
        <topology evidence="2">Single-pass type II membrane protein</topology>
    </subcellularLocation>
</comment>
<comment type="alternative products">
    <event type="alternative splicing"/>
    <isoform>
        <id>Q8BQT2-1</id>
        <name>1</name>
        <sequence type="displayed"/>
    </isoform>
    <isoform>
        <id>Q8BQT2-2</id>
        <name>2</name>
        <sequence type="described" ref="VSP_039089"/>
    </isoform>
</comment>
<comment type="tissue specificity">
    <text evidence="2">Mainly expressed in the brain and eye, some expression in kidney and skeletal muscle.</text>
</comment>
<comment type="PTM">
    <text>Among the many cysteines in the lumenal domain, most are probably involved in disulfide bonds.</text>
</comment>
<comment type="similarity">
    <text evidence="4">Belongs to the DIPK family.</text>
</comment>
<comment type="sequence caution" evidence="4">
    <conflict type="erroneous initiation">
        <sequence resource="EMBL-CDS" id="AAI19041"/>
    </conflict>
    <text>Truncated N-terminus.</text>
</comment>
<comment type="sequence caution" evidence="4">
    <conflict type="erroneous initiation">
        <sequence resource="EMBL-CDS" id="AAI19043"/>
    </conflict>
    <text>Truncated N-terminus.</text>
</comment>
<dbReference type="EMBL" id="AK046504">
    <property type="protein sequence ID" value="BAC32758.1"/>
    <property type="molecule type" value="mRNA"/>
</dbReference>
<dbReference type="EMBL" id="AC142448">
    <property type="status" value="NOT_ANNOTATED_CDS"/>
    <property type="molecule type" value="Genomic_DNA"/>
</dbReference>
<dbReference type="EMBL" id="BC119040">
    <property type="protein sequence ID" value="AAI19041.1"/>
    <property type="status" value="ALT_INIT"/>
    <property type="molecule type" value="mRNA"/>
</dbReference>
<dbReference type="EMBL" id="BC119042">
    <property type="protein sequence ID" value="AAI19043.1"/>
    <property type="status" value="ALT_INIT"/>
    <property type="molecule type" value="mRNA"/>
</dbReference>
<dbReference type="CCDS" id="CCDS29384.1">
    <molecule id="Q8BQT2-2"/>
</dbReference>
<dbReference type="RefSeq" id="NP_001395255.1">
    <molecule id="Q8BQT2-1"/>
    <property type="nucleotide sequence ID" value="NM_001408326.1"/>
</dbReference>
<dbReference type="RefSeq" id="NP_001395257.1">
    <molecule id="Q8BQT2-2"/>
    <property type="nucleotide sequence ID" value="NM_001408328.1"/>
</dbReference>
<dbReference type="RefSeq" id="NP_776131.1">
    <molecule id="Q8BQT2-2"/>
    <property type="nucleotide sequence ID" value="NM_173770.6"/>
</dbReference>
<dbReference type="RefSeq" id="XP_006526534.1">
    <property type="nucleotide sequence ID" value="XM_006526471.3"/>
</dbReference>
<dbReference type="RefSeq" id="XP_006526538.1">
    <molecule id="Q8BQT2-2"/>
    <property type="nucleotide sequence ID" value="XM_006526475.3"/>
</dbReference>
<dbReference type="RefSeq" id="XP_017173394.1">
    <property type="nucleotide sequence ID" value="XM_017317905.1"/>
</dbReference>
<dbReference type="RefSeq" id="XP_017173395.1">
    <property type="nucleotide sequence ID" value="XM_017317906.1"/>
</dbReference>
<dbReference type="RefSeq" id="XP_036017038.1">
    <molecule id="Q8BQT2-2"/>
    <property type="nucleotide sequence ID" value="XM_036161145.1"/>
</dbReference>
<dbReference type="RefSeq" id="XP_036017039.1">
    <molecule id="Q8BQT2-2"/>
    <property type="nucleotide sequence ID" value="XM_036161146.1"/>
</dbReference>
<dbReference type="FunCoup" id="Q8BQT2">
    <property type="interactions" value="3"/>
</dbReference>
<dbReference type="STRING" id="10090.ENSMUSP00000158524"/>
<dbReference type="GlyGen" id="Q8BQT2">
    <property type="glycosylation" value="1 site, 1 N-linked glycan (1 site)"/>
</dbReference>
<dbReference type="PhosphoSitePlus" id="Q8BQT2"/>
<dbReference type="SwissPalm" id="Q8BQT2"/>
<dbReference type="PaxDb" id="10090-ENSMUSP00000057697"/>
<dbReference type="Antibodypedia" id="62764">
    <property type="antibodies" value="6 antibodies from 6 providers"/>
</dbReference>
<dbReference type="DNASU" id="240479"/>
<dbReference type="Ensembl" id="ENSMUST00000052501.8">
    <molecule id="Q8BQT2-2"/>
    <property type="protein sequence ID" value="ENSMUSP00000057697.2"/>
    <property type="gene ID" value="ENSMUSG00000047992.12"/>
</dbReference>
<dbReference type="Ensembl" id="ENSMUST00000161429.3">
    <molecule id="Q8BQT2-1"/>
    <property type="protein sequence ID" value="ENSMUSP00000124603.3"/>
    <property type="gene ID" value="ENSMUSG00000047992.12"/>
</dbReference>
<dbReference type="Ensembl" id="ENSMUST00000235504.2">
    <molecule id="Q8BQT2-2"/>
    <property type="protein sequence ID" value="ENSMUSP00000158524.2"/>
    <property type="gene ID" value="ENSMUSG00000047992.12"/>
</dbReference>
<dbReference type="GeneID" id="240479"/>
<dbReference type="KEGG" id="mmu:240479"/>
<dbReference type="UCSC" id="uc008fuv.1">
    <molecule id="Q8BQT2-1"/>
    <property type="organism name" value="mouse"/>
</dbReference>
<dbReference type="AGR" id="MGI:3041188"/>
<dbReference type="CTD" id="125704"/>
<dbReference type="MGI" id="MGI:3041188">
    <property type="gene designation" value="Dipk1c"/>
</dbReference>
<dbReference type="VEuPathDB" id="HostDB:ENSMUSG00000047992"/>
<dbReference type="eggNOG" id="ENOG502QSPC">
    <property type="taxonomic scope" value="Eukaryota"/>
</dbReference>
<dbReference type="GeneTree" id="ENSGT00390000006452"/>
<dbReference type="HOGENOM" id="CLU_042490_1_0_1"/>
<dbReference type="InParanoid" id="Q8BQT2"/>
<dbReference type="OMA" id="LHYDRGK"/>
<dbReference type="OrthoDB" id="8543887at2759"/>
<dbReference type="PhylomeDB" id="Q8BQT2"/>
<dbReference type="TreeFam" id="TF313319"/>
<dbReference type="BioGRID-ORCS" id="240479">
    <property type="hits" value="3 hits in 77 CRISPR screens"/>
</dbReference>
<dbReference type="ChiTaRS" id="Fam69c">
    <property type="organism name" value="mouse"/>
</dbReference>
<dbReference type="PRO" id="PR:Q8BQT2"/>
<dbReference type="Proteomes" id="UP000000589">
    <property type="component" value="Chromosome 18"/>
</dbReference>
<dbReference type="RNAct" id="Q8BQT2">
    <property type="molecule type" value="protein"/>
</dbReference>
<dbReference type="Bgee" id="ENSMUSG00000047992">
    <property type="expression patterns" value="Expressed in ventricular zone and 44 other cell types or tissues"/>
</dbReference>
<dbReference type="ExpressionAtlas" id="Q8BQT2">
    <property type="expression patterns" value="baseline and differential"/>
</dbReference>
<dbReference type="GO" id="GO:0005789">
    <property type="term" value="C:endoplasmic reticulum membrane"/>
    <property type="evidence" value="ECO:0007669"/>
    <property type="project" value="UniProtKB-SubCell"/>
</dbReference>
<dbReference type="InterPro" id="IPR022049">
    <property type="entry name" value="FAM69_kinase_dom"/>
</dbReference>
<dbReference type="InterPro" id="IPR029244">
    <property type="entry name" value="FAM69_N"/>
</dbReference>
<dbReference type="PANTHER" id="PTHR21093:SF2">
    <property type="entry name" value="DIVERGENT PROTEIN KINASE DOMAIN 1C"/>
    <property type="match status" value="1"/>
</dbReference>
<dbReference type="PANTHER" id="PTHR21093">
    <property type="entry name" value="DIVERGENT PROTEIN KINASE DOMAIN 1C-RELATED"/>
    <property type="match status" value="1"/>
</dbReference>
<dbReference type="Pfam" id="PF12260">
    <property type="entry name" value="PIP49_C"/>
    <property type="match status" value="1"/>
</dbReference>
<dbReference type="Pfam" id="PF14875">
    <property type="entry name" value="PIP49_N"/>
    <property type="match status" value="1"/>
</dbReference>
<dbReference type="SMART" id="SM01299">
    <property type="entry name" value="PIP49_N"/>
    <property type="match status" value="1"/>
</dbReference>
<name>DIK1C_MOUSE</name>
<evidence type="ECO:0000255" key="1"/>
<evidence type="ECO:0000269" key="2">
    <source>
    </source>
</evidence>
<evidence type="ECO:0000303" key="3">
    <source>
    </source>
</evidence>
<evidence type="ECO:0000305" key="4"/>
<evidence type="ECO:0000312" key="5">
    <source>
        <dbReference type="MGI" id="MGI:3041188"/>
    </source>
</evidence>
<keyword id="KW-0025">Alternative splicing</keyword>
<keyword id="KW-1015">Disulfide bond</keyword>
<keyword id="KW-0256">Endoplasmic reticulum</keyword>
<keyword id="KW-0472">Membrane</keyword>
<keyword id="KW-1185">Reference proteome</keyword>
<keyword id="KW-0735">Signal-anchor</keyword>
<keyword id="KW-0812">Transmembrane</keyword>
<keyword id="KW-1133">Transmembrane helix</keyword>
<reference key="1">
    <citation type="journal article" date="2005" name="Science">
        <title>The transcriptional landscape of the mammalian genome.</title>
        <authorList>
            <person name="Carninci P."/>
            <person name="Kasukawa T."/>
            <person name="Katayama S."/>
            <person name="Gough J."/>
            <person name="Frith M.C."/>
            <person name="Maeda N."/>
            <person name="Oyama R."/>
            <person name="Ravasi T."/>
            <person name="Lenhard B."/>
            <person name="Wells C."/>
            <person name="Kodzius R."/>
            <person name="Shimokawa K."/>
            <person name="Bajic V.B."/>
            <person name="Brenner S.E."/>
            <person name="Batalov S."/>
            <person name="Forrest A.R."/>
            <person name="Zavolan M."/>
            <person name="Davis M.J."/>
            <person name="Wilming L.G."/>
            <person name="Aidinis V."/>
            <person name="Allen J.E."/>
            <person name="Ambesi-Impiombato A."/>
            <person name="Apweiler R."/>
            <person name="Aturaliya R.N."/>
            <person name="Bailey T.L."/>
            <person name="Bansal M."/>
            <person name="Baxter L."/>
            <person name="Beisel K.W."/>
            <person name="Bersano T."/>
            <person name="Bono H."/>
            <person name="Chalk A.M."/>
            <person name="Chiu K.P."/>
            <person name="Choudhary V."/>
            <person name="Christoffels A."/>
            <person name="Clutterbuck D.R."/>
            <person name="Crowe M.L."/>
            <person name="Dalla E."/>
            <person name="Dalrymple B.P."/>
            <person name="de Bono B."/>
            <person name="Della Gatta G."/>
            <person name="di Bernardo D."/>
            <person name="Down T."/>
            <person name="Engstrom P."/>
            <person name="Fagiolini M."/>
            <person name="Faulkner G."/>
            <person name="Fletcher C.F."/>
            <person name="Fukushima T."/>
            <person name="Furuno M."/>
            <person name="Futaki S."/>
            <person name="Gariboldi M."/>
            <person name="Georgii-Hemming P."/>
            <person name="Gingeras T.R."/>
            <person name="Gojobori T."/>
            <person name="Green R.E."/>
            <person name="Gustincich S."/>
            <person name="Harbers M."/>
            <person name="Hayashi Y."/>
            <person name="Hensch T.K."/>
            <person name="Hirokawa N."/>
            <person name="Hill D."/>
            <person name="Huminiecki L."/>
            <person name="Iacono M."/>
            <person name="Ikeo K."/>
            <person name="Iwama A."/>
            <person name="Ishikawa T."/>
            <person name="Jakt M."/>
            <person name="Kanapin A."/>
            <person name="Katoh M."/>
            <person name="Kawasawa Y."/>
            <person name="Kelso J."/>
            <person name="Kitamura H."/>
            <person name="Kitano H."/>
            <person name="Kollias G."/>
            <person name="Krishnan S.P."/>
            <person name="Kruger A."/>
            <person name="Kummerfeld S.K."/>
            <person name="Kurochkin I.V."/>
            <person name="Lareau L.F."/>
            <person name="Lazarevic D."/>
            <person name="Lipovich L."/>
            <person name="Liu J."/>
            <person name="Liuni S."/>
            <person name="McWilliam S."/>
            <person name="Madan Babu M."/>
            <person name="Madera M."/>
            <person name="Marchionni L."/>
            <person name="Matsuda H."/>
            <person name="Matsuzawa S."/>
            <person name="Miki H."/>
            <person name="Mignone F."/>
            <person name="Miyake S."/>
            <person name="Morris K."/>
            <person name="Mottagui-Tabar S."/>
            <person name="Mulder N."/>
            <person name="Nakano N."/>
            <person name="Nakauchi H."/>
            <person name="Ng P."/>
            <person name="Nilsson R."/>
            <person name="Nishiguchi S."/>
            <person name="Nishikawa S."/>
            <person name="Nori F."/>
            <person name="Ohara O."/>
            <person name="Okazaki Y."/>
            <person name="Orlando V."/>
            <person name="Pang K.C."/>
            <person name="Pavan W.J."/>
            <person name="Pavesi G."/>
            <person name="Pesole G."/>
            <person name="Petrovsky N."/>
            <person name="Piazza S."/>
            <person name="Reed J."/>
            <person name="Reid J.F."/>
            <person name="Ring B.Z."/>
            <person name="Ringwald M."/>
            <person name="Rost B."/>
            <person name="Ruan Y."/>
            <person name="Salzberg S.L."/>
            <person name="Sandelin A."/>
            <person name="Schneider C."/>
            <person name="Schoenbach C."/>
            <person name="Sekiguchi K."/>
            <person name="Semple C.A."/>
            <person name="Seno S."/>
            <person name="Sessa L."/>
            <person name="Sheng Y."/>
            <person name="Shibata Y."/>
            <person name="Shimada H."/>
            <person name="Shimada K."/>
            <person name="Silva D."/>
            <person name="Sinclair B."/>
            <person name="Sperling S."/>
            <person name="Stupka E."/>
            <person name="Sugiura K."/>
            <person name="Sultana R."/>
            <person name="Takenaka Y."/>
            <person name="Taki K."/>
            <person name="Tammoja K."/>
            <person name="Tan S.L."/>
            <person name="Tang S."/>
            <person name="Taylor M.S."/>
            <person name="Tegner J."/>
            <person name="Teichmann S.A."/>
            <person name="Ueda H.R."/>
            <person name="van Nimwegen E."/>
            <person name="Verardo R."/>
            <person name="Wei C.L."/>
            <person name="Yagi K."/>
            <person name="Yamanishi H."/>
            <person name="Zabarovsky E."/>
            <person name="Zhu S."/>
            <person name="Zimmer A."/>
            <person name="Hide W."/>
            <person name="Bult C."/>
            <person name="Grimmond S.M."/>
            <person name="Teasdale R.D."/>
            <person name="Liu E.T."/>
            <person name="Brusic V."/>
            <person name="Quackenbush J."/>
            <person name="Wahlestedt C."/>
            <person name="Mattick J.S."/>
            <person name="Hume D.A."/>
            <person name="Kai C."/>
            <person name="Sasaki D."/>
            <person name="Tomaru Y."/>
            <person name="Fukuda S."/>
            <person name="Kanamori-Katayama M."/>
            <person name="Suzuki M."/>
            <person name="Aoki J."/>
            <person name="Arakawa T."/>
            <person name="Iida J."/>
            <person name="Imamura K."/>
            <person name="Itoh M."/>
            <person name="Kato T."/>
            <person name="Kawaji H."/>
            <person name="Kawagashira N."/>
            <person name="Kawashima T."/>
            <person name="Kojima M."/>
            <person name="Kondo S."/>
            <person name="Konno H."/>
            <person name="Nakano K."/>
            <person name="Ninomiya N."/>
            <person name="Nishio T."/>
            <person name="Okada M."/>
            <person name="Plessy C."/>
            <person name="Shibata K."/>
            <person name="Shiraki T."/>
            <person name="Suzuki S."/>
            <person name="Tagami M."/>
            <person name="Waki K."/>
            <person name="Watahiki A."/>
            <person name="Okamura-Oho Y."/>
            <person name="Suzuki H."/>
            <person name="Kawai J."/>
            <person name="Hayashizaki Y."/>
        </authorList>
    </citation>
    <scope>NUCLEOTIDE SEQUENCE [LARGE SCALE MRNA] (ISOFORM 2)</scope>
    <source>
        <strain>C57BL/6J</strain>
        <tissue>Corpora quadrigemina</tissue>
    </source>
</reference>
<reference key="2">
    <citation type="journal article" date="2009" name="PLoS Biol.">
        <title>Lineage-specific biology revealed by a finished genome assembly of the mouse.</title>
        <authorList>
            <person name="Church D.M."/>
            <person name="Goodstadt L."/>
            <person name="Hillier L.W."/>
            <person name="Zody M.C."/>
            <person name="Goldstein S."/>
            <person name="She X."/>
            <person name="Bult C.J."/>
            <person name="Agarwala R."/>
            <person name="Cherry J.L."/>
            <person name="DiCuccio M."/>
            <person name="Hlavina W."/>
            <person name="Kapustin Y."/>
            <person name="Meric P."/>
            <person name="Maglott D."/>
            <person name="Birtle Z."/>
            <person name="Marques A.C."/>
            <person name="Graves T."/>
            <person name="Zhou S."/>
            <person name="Teague B."/>
            <person name="Potamousis K."/>
            <person name="Churas C."/>
            <person name="Place M."/>
            <person name="Herschleb J."/>
            <person name="Runnheim R."/>
            <person name="Forrest D."/>
            <person name="Amos-Landgraf J."/>
            <person name="Schwartz D.C."/>
            <person name="Cheng Z."/>
            <person name="Lindblad-Toh K."/>
            <person name="Eichler E.E."/>
            <person name="Ponting C.P."/>
        </authorList>
    </citation>
    <scope>NUCLEOTIDE SEQUENCE [LARGE SCALE GENOMIC DNA]</scope>
    <source>
        <strain>C57BL/6J</strain>
    </source>
</reference>
<reference key="3">
    <citation type="journal article" date="2004" name="Genome Res.">
        <title>The status, quality, and expansion of the NIH full-length cDNA project: the Mammalian Gene Collection (MGC).</title>
        <authorList>
            <consortium name="The MGC Project Team"/>
        </authorList>
    </citation>
    <scope>NUCLEOTIDE SEQUENCE [LARGE SCALE MRNA] OF 115-410 (ISOFORM 1)</scope>
    <source>
        <tissue>Brain</tissue>
    </source>
</reference>
<reference key="4">
    <citation type="journal article" date="2011" name="Biochem. Biophys. Res. Commun.">
        <title>Characterisation of the FAM69 family of cysteine-rich endoplasmic reticulum proteins.</title>
        <authorList>
            <person name="Tennant-Eyles A.J."/>
            <person name="Moffitt H."/>
            <person name="Whitehouse C.A."/>
            <person name="Roberts R.G."/>
        </authorList>
    </citation>
    <scope>SUBCELLULAR LOCATION</scope>
    <scope>TISSUE SPECIFICITY</scope>
</reference>
<proteinExistence type="evidence at transcript level"/>
<protein>
    <recommendedName>
        <fullName>Divergent protein kinase domain 1C</fullName>
    </recommendedName>
    <alternativeName>
        <fullName>Protein FAM69C</fullName>
    </alternativeName>
</protein>
<accession>Q8BQT2</accession>
<sequence length="410" mass="45976">MARAAGERGRAARCGRWRRGALLAFAAWTAGWVLAAALLLRAHPSVLSERCTDEKSRRILAALCQDYRRGWLTGALCEDLCVGGELLYQRCLYYERGKKVLQAQWRGRTVVLKSKREAFSSFPPLTLLEEEAGAGAPGIPEAELLLMVAGEVKNTLGLELPNNSIAPLWPARQGPGWRQQLASAWSLLQQEEYVYFSLLPDLSRHILPVLGSCGHFYAVEYLAAGSPHHKALFPLDDAGQAQAISHIALSFLDMVSHFDSDFSHRLHLCDVKPENFAIKRDFTVVAIDVDMAFFEPKMREILEQNCTGDEDCNFFDCFSKCDLRVHKCGAQRVNSNLQVICDKIFRHWFSSTHRSPAVSLQLRLQLQQAVQECAQHGGSSGNSWTASSSVFWKLRWLLQATLKELQEAEK</sequence>
<organism>
    <name type="scientific">Mus musculus</name>
    <name type="common">Mouse</name>
    <dbReference type="NCBI Taxonomy" id="10090"/>
    <lineage>
        <taxon>Eukaryota</taxon>
        <taxon>Metazoa</taxon>
        <taxon>Chordata</taxon>
        <taxon>Craniata</taxon>
        <taxon>Vertebrata</taxon>
        <taxon>Euteleostomi</taxon>
        <taxon>Mammalia</taxon>
        <taxon>Eutheria</taxon>
        <taxon>Euarchontoglires</taxon>
        <taxon>Glires</taxon>
        <taxon>Rodentia</taxon>
        <taxon>Myomorpha</taxon>
        <taxon>Muroidea</taxon>
        <taxon>Muridae</taxon>
        <taxon>Murinae</taxon>
        <taxon>Mus</taxon>
        <taxon>Mus</taxon>
    </lineage>
</organism>